<comment type="function">
    <text evidence="1">Catalyzes the ATP-dependent amination of UTP to CTP with either L-glutamine or ammonia as the source of nitrogen. Regulates intracellular CTP levels through interactions with the four ribonucleotide triphosphates.</text>
</comment>
<comment type="catalytic activity">
    <reaction evidence="1">
        <text>UTP + L-glutamine + ATP + H2O = CTP + L-glutamate + ADP + phosphate + 2 H(+)</text>
        <dbReference type="Rhea" id="RHEA:26426"/>
        <dbReference type="ChEBI" id="CHEBI:15377"/>
        <dbReference type="ChEBI" id="CHEBI:15378"/>
        <dbReference type="ChEBI" id="CHEBI:29985"/>
        <dbReference type="ChEBI" id="CHEBI:30616"/>
        <dbReference type="ChEBI" id="CHEBI:37563"/>
        <dbReference type="ChEBI" id="CHEBI:43474"/>
        <dbReference type="ChEBI" id="CHEBI:46398"/>
        <dbReference type="ChEBI" id="CHEBI:58359"/>
        <dbReference type="ChEBI" id="CHEBI:456216"/>
        <dbReference type="EC" id="6.3.4.2"/>
    </reaction>
</comment>
<comment type="catalytic activity">
    <reaction evidence="1">
        <text>L-glutamine + H2O = L-glutamate + NH4(+)</text>
        <dbReference type="Rhea" id="RHEA:15889"/>
        <dbReference type="ChEBI" id="CHEBI:15377"/>
        <dbReference type="ChEBI" id="CHEBI:28938"/>
        <dbReference type="ChEBI" id="CHEBI:29985"/>
        <dbReference type="ChEBI" id="CHEBI:58359"/>
    </reaction>
</comment>
<comment type="catalytic activity">
    <reaction evidence="1">
        <text>UTP + NH4(+) + ATP = CTP + ADP + phosphate + 2 H(+)</text>
        <dbReference type="Rhea" id="RHEA:16597"/>
        <dbReference type="ChEBI" id="CHEBI:15378"/>
        <dbReference type="ChEBI" id="CHEBI:28938"/>
        <dbReference type="ChEBI" id="CHEBI:30616"/>
        <dbReference type="ChEBI" id="CHEBI:37563"/>
        <dbReference type="ChEBI" id="CHEBI:43474"/>
        <dbReference type="ChEBI" id="CHEBI:46398"/>
        <dbReference type="ChEBI" id="CHEBI:456216"/>
    </reaction>
</comment>
<comment type="activity regulation">
    <text evidence="1">Allosterically activated by GTP, when glutamine is the substrate; GTP has no effect on the reaction when ammonia is the substrate. The allosteric effector GTP functions by stabilizing the protein conformation that binds the tetrahedral intermediate(s) formed during glutamine hydrolysis. Inhibited by the product CTP, via allosteric rather than competitive inhibition.</text>
</comment>
<comment type="pathway">
    <text evidence="1">Pyrimidine metabolism; CTP biosynthesis via de novo pathway; CTP from UDP: step 2/2.</text>
</comment>
<comment type="subunit">
    <text evidence="1">Homotetramer.</text>
</comment>
<comment type="miscellaneous">
    <text evidence="1">CTPSs have evolved a hybrid strategy for distinguishing between UTP and CTP. The overlapping regions of the product feedback inhibitory and substrate sites recognize a common feature in both compounds, the triphosphate moiety. To differentiate isosteric substrate and product pyrimidine rings, an additional pocket far from the expected kinase/ligase catalytic site, specifically recognizes the cytosine and ribose portions of the product inhibitor.</text>
</comment>
<comment type="similarity">
    <text evidence="1">Belongs to the CTP synthase family.</text>
</comment>
<dbReference type="EC" id="6.3.4.2" evidence="1"/>
<dbReference type="EMBL" id="CP000250">
    <property type="protein sequence ID" value="ABD07492.1"/>
    <property type="molecule type" value="Genomic_DNA"/>
</dbReference>
<dbReference type="RefSeq" id="WP_011441677.1">
    <property type="nucleotide sequence ID" value="NC_007778.1"/>
</dbReference>
<dbReference type="SMR" id="Q2IWB8"/>
<dbReference type="STRING" id="316058.RPB_2790"/>
<dbReference type="MEROPS" id="C26.964"/>
<dbReference type="KEGG" id="rpb:RPB_2790"/>
<dbReference type="eggNOG" id="COG0504">
    <property type="taxonomic scope" value="Bacteria"/>
</dbReference>
<dbReference type="HOGENOM" id="CLU_011675_5_0_5"/>
<dbReference type="OrthoDB" id="9801107at2"/>
<dbReference type="UniPathway" id="UPA00159">
    <property type="reaction ID" value="UER00277"/>
</dbReference>
<dbReference type="Proteomes" id="UP000008809">
    <property type="component" value="Chromosome"/>
</dbReference>
<dbReference type="GO" id="GO:0005829">
    <property type="term" value="C:cytosol"/>
    <property type="evidence" value="ECO:0007669"/>
    <property type="project" value="TreeGrafter"/>
</dbReference>
<dbReference type="GO" id="GO:0005524">
    <property type="term" value="F:ATP binding"/>
    <property type="evidence" value="ECO:0007669"/>
    <property type="project" value="UniProtKB-KW"/>
</dbReference>
<dbReference type="GO" id="GO:0003883">
    <property type="term" value="F:CTP synthase activity"/>
    <property type="evidence" value="ECO:0007669"/>
    <property type="project" value="UniProtKB-UniRule"/>
</dbReference>
<dbReference type="GO" id="GO:0004359">
    <property type="term" value="F:glutaminase activity"/>
    <property type="evidence" value="ECO:0007669"/>
    <property type="project" value="RHEA"/>
</dbReference>
<dbReference type="GO" id="GO:0042802">
    <property type="term" value="F:identical protein binding"/>
    <property type="evidence" value="ECO:0007669"/>
    <property type="project" value="TreeGrafter"/>
</dbReference>
<dbReference type="GO" id="GO:0046872">
    <property type="term" value="F:metal ion binding"/>
    <property type="evidence" value="ECO:0007669"/>
    <property type="project" value="UniProtKB-KW"/>
</dbReference>
<dbReference type="GO" id="GO:0044210">
    <property type="term" value="P:'de novo' CTP biosynthetic process"/>
    <property type="evidence" value="ECO:0007669"/>
    <property type="project" value="UniProtKB-UniRule"/>
</dbReference>
<dbReference type="GO" id="GO:0019856">
    <property type="term" value="P:pyrimidine nucleobase biosynthetic process"/>
    <property type="evidence" value="ECO:0007669"/>
    <property type="project" value="TreeGrafter"/>
</dbReference>
<dbReference type="CDD" id="cd03113">
    <property type="entry name" value="CTPS_N"/>
    <property type="match status" value="1"/>
</dbReference>
<dbReference type="CDD" id="cd01746">
    <property type="entry name" value="GATase1_CTP_Synthase"/>
    <property type="match status" value="1"/>
</dbReference>
<dbReference type="FunFam" id="3.40.50.300:FF:000009">
    <property type="entry name" value="CTP synthase"/>
    <property type="match status" value="1"/>
</dbReference>
<dbReference type="FunFam" id="3.40.50.880:FF:000002">
    <property type="entry name" value="CTP synthase"/>
    <property type="match status" value="1"/>
</dbReference>
<dbReference type="Gene3D" id="3.40.50.880">
    <property type="match status" value="1"/>
</dbReference>
<dbReference type="Gene3D" id="3.40.50.300">
    <property type="entry name" value="P-loop containing nucleotide triphosphate hydrolases"/>
    <property type="match status" value="1"/>
</dbReference>
<dbReference type="HAMAP" id="MF_01227">
    <property type="entry name" value="PyrG"/>
    <property type="match status" value="1"/>
</dbReference>
<dbReference type="InterPro" id="IPR029062">
    <property type="entry name" value="Class_I_gatase-like"/>
</dbReference>
<dbReference type="InterPro" id="IPR004468">
    <property type="entry name" value="CTP_synthase"/>
</dbReference>
<dbReference type="InterPro" id="IPR017456">
    <property type="entry name" value="CTP_synthase_N"/>
</dbReference>
<dbReference type="InterPro" id="IPR017926">
    <property type="entry name" value="GATASE"/>
</dbReference>
<dbReference type="InterPro" id="IPR033828">
    <property type="entry name" value="GATase1_CTP_Synthase"/>
</dbReference>
<dbReference type="InterPro" id="IPR027417">
    <property type="entry name" value="P-loop_NTPase"/>
</dbReference>
<dbReference type="NCBIfam" id="NF003792">
    <property type="entry name" value="PRK05380.1"/>
    <property type="match status" value="1"/>
</dbReference>
<dbReference type="NCBIfam" id="TIGR00337">
    <property type="entry name" value="PyrG"/>
    <property type="match status" value="1"/>
</dbReference>
<dbReference type="PANTHER" id="PTHR11550">
    <property type="entry name" value="CTP SYNTHASE"/>
    <property type="match status" value="1"/>
</dbReference>
<dbReference type="PANTHER" id="PTHR11550:SF0">
    <property type="entry name" value="CTP SYNTHASE-RELATED"/>
    <property type="match status" value="1"/>
</dbReference>
<dbReference type="Pfam" id="PF06418">
    <property type="entry name" value="CTP_synth_N"/>
    <property type="match status" value="1"/>
</dbReference>
<dbReference type="Pfam" id="PF00117">
    <property type="entry name" value="GATase"/>
    <property type="match status" value="1"/>
</dbReference>
<dbReference type="SUPFAM" id="SSF52317">
    <property type="entry name" value="Class I glutamine amidotransferase-like"/>
    <property type="match status" value="1"/>
</dbReference>
<dbReference type="SUPFAM" id="SSF52540">
    <property type="entry name" value="P-loop containing nucleoside triphosphate hydrolases"/>
    <property type="match status" value="1"/>
</dbReference>
<dbReference type="PROSITE" id="PS51273">
    <property type="entry name" value="GATASE_TYPE_1"/>
    <property type="match status" value="1"/>
</dbReference>
<protein>
    <recommendedName>
        <fullName evidence="1">CTP synthase</fullName>
        <ecNumber evidence="1">6.3.4.2</ecNumber>
    </recommendedName>
    <alternativeName>
        <fullName evidence="1">Cytidine 5'-triphosphate synthase</fullName>
    </alternativeName>
    <alternativeName>
        <fullName evidence="1">Cytidine triphosphate synthetase</fullName>
        <shortName evidence="1">CTP synthetase</shortName>
        <shortName evidence="1">CTPS</shortName>
    </alternativeName>
    <alternativeName>
        <fullName evidence="1">UTP--ammonia ligase</fullName>
    </alternativeName>
</protein>
<sequence length="543" mass="60275">MARYIFITGGVVSSLGKGLASAALGALLQARGYKVRLRKLDPYLNLDPGTMSPYQHGEVFVTDDGAETDLDLGHYERFTGRPATRQDNITTGRIYQDILTKERRGDYLGATIQVVPHVTNAIKDFIVDSNDGYDFVLVEIGGTVGDIEGLPFFEAIRQIKNDLPRGDVIYIHLTLLPYIPSAGELKTKPTQHSVKELRSIGIQPDILLCRTDRPIPKEERRKLGLFCNVRESAVIEARDADSIYAVPEAYHAAGLDDEVLAAFAIAAEQPPALERWHQINERIRNPEGAVTIAIVGKYTGMKDAYKSLIEALSHGGIANKVQVKLDWIESEVFENEDPAPFLEHVNGILVPGGFGQRGAEGKIKAAQFARERDVPYFGICFGMQMAVIEAARNLAGIEQANSTEFGPTAEPLVGLMTEWLRGNELERRSNAGDLGGTMRLGAYPAALKRGSRVSKIYGDVLEISERHRHRYEVNTAYKDRLEQHGLRFSGMSPDGVLPEIVEYEDHPWFIGVQFHPELKSRPFEPHPLFSSFIEAALVRSRLV</sequence>
<organism>
    <name type="scientific">Rhodopseudomonas palustris (strain HaA2)</name>
    <dbReference type="NCBI Taxonomy" id="316058"/>
    <lineage>
        <taxon>Bacteria</taxon>
        <taxon>Pseudomonadati</taxon>
        <taxon>Pseudomonadota</taxon>
        <taxon>Alphaproteobacteria</taxon>
        <taxon>Hyphomicrobiales</taxon>
        <taxon>Nitrobacteraceae</taxon>
        <taxon>Rhodopseudomonas</taxon>
    </lineage>
</organism>
<evidence type="ECO:0000255" key="1">
    <source>
        <dbReference type="HAMAP-Rule" id="MF_01227"/>
    </source>
</evidence>
<feature type="chain" id="PRO_0000266201" description="CTP synthase">
    <location>
        <begin position="1"/>
        <end position="543"/>
    </location>
</feature>
<feature type="domain" description="Glutamine amidotransferase type-1" evidence="1">
    <location>
        <begin position="291"/>
        <end position="542"/>
    </location>
</feature>
<feature type="region of interest" description="Amidoligase domain" evidence="1">
    <location>
        <begin position="1"/>
        <end position="265"/>
    </location>
</feature>
<feature type="active site" description="Nucleophile; for glutamine hydrolysis" evidence="1">
    <location>
        <position position="380"/>
    </location>
</feature>
<feature type="active site" evidence="1">
    <location>
        <position position="515"/>
    </location>
</feature>
<feature type="active site" evidence="1">
    <location>
        <position position="517"/>
    </location>
</feature>
<feature type="binding site" evidence="1">
    <location>
        <position position="13"/>
    </location>
    <ligand>
        <name>CTP</name>
        <dbReference type="ChEBI" id="CHEBI:37563"/>
        <note>allosteric inhibitor</note>
    </ligand>
</feature>
<feature type="binding site" evidence="1">
    <location>
        <position position="13"/>
    </location>
    <ligand>
        <name>UTP</name>
        <dbReference type="ChEBI" id="CHEBI:46398"/>
    </ligand>
</feature>
<feature type="binding site" evidence="1">
    <location>
        <begin position="14"/>
        <end position="19"/>
    </location>
    <ligand>
        <name>ATP</name>
        <dbReference type="ChEBI" id="CHEBI:30616"/>
    </ligand>
</feature>
<feature type="binding site" evidence="1">
    <location>
        <position position="54"/>
    </location>
    <ligand>
        <name>L-glutamine</name>
        <dbReference type="ChEBI" id="CHEBI:58359"/>
    </ligand>
</feature>
<feature type="binding site" evidence="1">
    <location>
        <position position="71"/>
    </location>
    <ligand>
        <name>ATP</name>
        <dbReference type="ChEBI" id="CHEBI:30616"/>
    </ligand>
</feature>
<feature type="binding site" evidence="1">
    <location>
        <position position="71"/>
    </location>
    <ligand>
        <name>Mg(2+)</name>
        <dbReference type="ChEBI" id="CHEBI:18420"/>
    </ligand>
</feature>
<feature type="binding site" evidence="1">
    <location>
        <position position="139"/>
    </location>
    <ligand>
        <name>Mg(2+)</name>
        <dbReference type="ChEBI" id="CHEBI:18420"/>
    </ligand>
</feature>
<feature type="binding site" evidence="1">
    <location>
        <begin position="146"/>
        <end position="148"/>
    </location>
    <ligand>
        <name>CTP</name>
        <dbReference type="ChEBI" id="CHEBI:37563"/>
        <note>allosteric inhibitor</note>
    </ligand>
</feature>
<feature type="binding site" evidence="1">
    <location>
        <begin position="186"/>
        <end position="191"/>
    </location>
    <ligand>
        <name>CTP</name>
        <dbReference type="ChEBI" id="CHEBI:37563"/>
        <note>allosteric inhibitor</note>
    </ligand>
</feature>
<feature type="binding site" evidence="1">
    <location>
        <begin position="186"/>
        <end position="191"/>
    </location>
    <ligand>
        <name>UTP</name>
        <dbReference type="ChEBI" id="CHEBI:46398"/>
    </ligand>
</feature>
<feature type="binding site" evidence="1">
    <location>
        <position position="222"/>
    </location>
    <ligand>
        <name>CTP</name>
        <dbReference type="ChEBI" id="CHEBI:37563"/>
        <note>allosteric inhibitor</note>
    </ligand>
</feature>
<feature type="binding site" evidence="1">
    <location>
        <position position="222"/>
    </location>
    <ligand>
        <name>UTP</name>
        <dbReference type="ChEBI" id="CHEBI:46398"/>
    </ligand>
</feature>
<feature type="binding site" evidence="1">
    <location>
        <begin position="238"/>
        <end position="240"/>
    </location>
    <ligand>
        <name>ATP</name>
        <dbReference type="ChEBI" id="CHEBI:30616"/>
    </ligand>
</feature>
<feature type="binding site" evidence="1">
    <location>
        <position position="353"/>
    </location>
    <ligand>
        <name>L-glutamine</name>
        <dbReference type="ChEBI" id="CHEBI:58359"/>
    </ligand>
</feature>
<feature type="binding site" evidence="1">
    <location>
        <begin position="381"/>
        <end position="384"/>
    </location>
    <ligand>
        <name>L-glutamine</name>
        <dbReference type="ChEBI" id="CHEBI:58359"/>
    </ligand>
</feature>
<feature type="binding site" evidence="1">
    <location>
        <position position="404"/>
    </location>
    <ligand>
        <name>L-glutamine</name>
        <dbReference type="ChEBI" id="CHEBI:58359"/>
    </ligand>
</feature>
<feature type="binding site" evidence="1">
    <location>
        <position position="470"/>
    </location>
    <ligand>
        <name>L-glutamine</name>
        <dbReference type="ChEBI" id="CHEBI:58359"/>
    </ligand>
</feature>
<name>PYRG_RHOP2</name>
<accession>Q2IWB8</accession>
<reference key="1">
    <citation type="submission" date="2006-01" db="EMBL/GenBank/DDBJ databases">
        <title>Complete sequence of Rhodopseudomonas palustris HaA2.</title>
        <authorList>
            <consortium name="US DOE Joint Genome Institute"/>
            <person name="Copeland A."/>
            <person name="Lucas S."/>
            <person name="Lapidus A."/>
            <person name="Barry K."/>
            <person name="Detter J.C."/>
            <person name="Glavina T."/>
            <person name="Hammon N."/>
            <person name="Israni S."/>
            <person name="Pitluck S."/>
            <person name="Chain P."/>
            <person name="Malfatti S."/>
            <person name="Shin M."/>
            <person name="Vergez L."/>
            <person name="Schmutz J."/>
            <person name="Larimer F."/>
            <person name="Land M."/>
            <person name="Hauser L."/>
            <person name="Pelletier D.A."/>
            <person name="Kyrpides N."/>
            <person name="Anderson I."/>
            <person name="Oda Y."/>
            <person name="Harwood C.S."/>
            <person name="Richardson P."/>
        </authorList>
    </citation>
    <scope>NUCLEOTIDE SEQUENCE [LARGE SCALE GENOMIC DNA]</scope>
    <source>
        <strain>HaA2</strain>
    </source>
</reference>
<gene>
    <name evidence="1" type="primary">pyrG</name>
    <name type="ordered locus">RPB_2790</name>
</gene>
<keyword id="KW-0067">ATP-binding</keyword>
<keyword id="KW-0315">Glutamine amidotransferase</keyword>
<keyword id="KW-0436">Ligase</keyword>
<keyword id="KW-0460">Magnesium</keyword>
<keyword id="KW-0479">Metal-binding</keyword>
<keyword id="KW-0547">Nucleotide-binding</keyword>
<keyword id="KW-0665">Pyrimidine biosynthesis</keyword>
<keyword id="KW-1185">Reference proteome</keyword>
<proteinExistence type="inferred from homology"/>